<accession>P65628</accession>
<accession>Q99SG7</accession>
<dbReference type="EMBL" id="BA000017">
    <property type="protein sequence ID" value="BAB58252.1"/>
    <property type="molecule type" value="Genomic_DNA"/>
</dbReference>
<dbReference type="RefSeq" id="WP_000725802.1">
    <property type="nucleotide sequence ID" value="NC_002758.2"/>
</dbReference>
<dbReference type="SMR" id="P65628"/>
<dbReference type="KEGG" id="sav:SAV2090"/>
<dbReference type="HOGENOM" id="CLU_036138_5_2_9"/>
<dbReference type="PhylomeDB" id="P65628"/>
<dbReference type="Proteomes" id="UP000002481">
    <property type="component" value="Chromosome"/>
</dbReference>
<dbReference type="GO" id="GO:0005886">
    <property type="term" value="C:plasma membrane"/>
    <property type="evidence" value="ECO:0007669"/>
    <property type="project" value="UniProtKB-SubCell"/>
</dbReference>
<dbReference type="GO" id="GO:0032977">
    <property type="term" value="F:membrane insertase activity"/>
    <property type="evidence" value="ECO:0007669"/>
    <property type="project" value="InterPro"/>
</dbReference>
<dbReference type="GO" id="GO:0051205">
    <property type="term" value="P:protein insertion into membrane"/>
    <property type="evidence" value="ECO:0007669"/>
    <property type="project" value="TreeGrafter"/>
</dbReference>
<dbReference type="GO" id="GO:0015031">
    <property type="term" value="P:protein transport"/>
    <property type="evidence" value="ECO:0007669"/>
    <property type="project" value="UniProtKB-KW"/>
</dbReference>
<dbReference type="CDD" id="cd20070">
    <property type="entry name" value="5TM_YidC_Alb3"/>
    <property type="match status" value="1"/>
</dbReference>
<dbReference type="HAMAP" id="MF_01811">
    <property type="entry name" value="YidC_type2"/>
    <property type="match status" value="1"/>
</dbReference>
<dbReference type="InterPro" id="IPR001708">
    <property type="entry name" value="YidC/ALB3/OXA1/COX18"/>
</dbReference>
<dbReference type="InterPro" id="IPR028055">
    <property type="entry name" value="YidC/Oxa/ALB_C"/>
</dbReference>
<dbReference type="InterPro" id="IPR023060">
    <property type="entry name" value="YidC/YidC1/YidC2_Firmicutes"/>
</dbReference>
<dbReference type="InterPro" id="IPR047196">
    <property type="entry name" value="YidC_ALB_C"/>
</dbReference>
<dbReference type="NCBIfam" id="TIGR03592">
    <property type="entry name" value="yidC_oxa1_cterm"/>
    <property type="match status" value="1"/>
</dbReference>
<dbReference type="PANTHER" id="PTHR12428:SF65">
    <property type="entry name" value="CYTOCHROME C OXIDASE ASSEMBLY PROTEIN COX18, MITOCHONDRIAL"/>
    <property type="match status" value="1"/>
</dbReference>
<dbReference type="PANTHER" id="PTHR12428">
    <property type="entry name" value="OXA1"/>
    <property type="match status" value="1"/>
</dbReference>
<dbReference type="Pfam" id="PF02096">
    <property type="entry name" value="60KD_IMP"/>
    <property type="match status" value="1"/>
</dbReference>
<dbReference type="PRINTS" id="PR00701">
    <property type="entry name" value="60KDINNERMP"/>
</dbReference>
<dbReference type="PROSITE" id="PS51257">
    <property type="entry name" value="PROKAR_LIPOPROTEIN"/>
    <property type="match status" value="1"/>
</dbReference>
<name>YIDC_STAAM</name>
<gene>
    <name evidence="1" type="primary">yidC</name>
    <name type="ordered locus">SAV2090</name>
</gene>
<reference key="1">
    <citation type="journal article" date="2001" name="Lancet">
        <title>Whole genome sequencing of meticillin-resistant Staphylococcus aureus.</title>
        <authorList>
            <person name="Kuroda M."/>
            <person name="Ohta T."/>
            <person name="Uchiyama I."/>
            <person name="Baba T."/>
            <person name="Yuzawa H."/>
            <person name="Kobayashi I."/>
            <person name="Cui L."/>
            <person name="Oguchi A."/>
            <person name="Aoki K."/>
            <person name="Nagai Y."/>
            <person name="Lian J.-Q."/>
            <person name="Ito T."/>
            <person name="Kanamori M."/>
            <person name="Matsumaru H."/>
            <person name="Maruyama A."/>
            <person name="Murakami H."/>
            <person name="Hosoyama A."/>
            <person name="Mizutani-Ui Y."/>
            <person name="Takahashi N.K."/>
            <person name="Sawano T."/>
            <person name="Inoue R."/>
            <person name="Kaito C."/>
            <person name="Sekimizu K."/>
            <person name="Hirakawa H."/>
            <person name="Kuhara S."/>
            <person name="Goto S."/>
            <person name="Yabuzaki J."/>
            <person name="Kanehisa M."/>
            <person name="Yamashita A."/>
            <person name="Oshima K."/>
            <person name="Furuya K."/>
            <person name="Yoshino C."/>
            <person name="Shiba T."/>
            <person name="Hattori M."/>
            <person name="Ogasawara N."/>
            <person name="Hayashi H."/>
            <person name="Hiramatsu K."/>
        </authorList>
    </citation>
    <scope>NUCLEOTIDE SEQUENCE [LARGE SCALE GENOMIC DNA]</scope>
    <source>
        <strain>Mu50 / ATCC 700699</strain>
    </source>
</reference>
<proteinExistence type="inferred from homology"/>
<keyword id="KW-1003">Cell membrane</keyword>
<keyword id="KW-0143">Chaperone</keyword>
<keyword id="KW-0449">Lipoprotein</keyword>
<keyword id="KW-0472">Membrane</keyword>
<keyword id="KW-0564">Palmitate</keyword>
<keyword id="KW-0653">Protein transport</keyword>
<keyword id="KW-0732">Signal</keyword>
<keyword id="KW-0812">Transmembrane</keyword>
<keyword id="KW-1133">Transmembrane helix</keyword>
<keyword id="KW-0813">Transport</keyword>
<sequence>MKKKALLPLFLGIMVFLAGCDYSKPEKRSGFFYNTFVDPMKNVLDWLGNNLLNDNYGLAIIILVLVIRIILLPFMLSNYKNSHMMRQKMKVAKPEVEKIQEKVKRARTQEEKMAANQELMQVYKKYDMNPIKSMLGCLPMLIQLPIIMGLYFVLKDQLVDGLFKYPHFLWFDLGRPDIWITIIAGVLYFIQAYVSSKTMPDEQRQMGYMMMVISPIMIIWISLSSASALGLYWSVSAAFLVVQTHFANIYYEKVAKKEVQPFIEAYEREHNGGSNKKGKNTQVVSKKKKK</sequence>
<comment type="function">
    <text evidence="1">Required for the insertion and/or proper folding and/or complex formation of integral membrane proteins into the membrane. Involved in integration of membrane proteins that insert both dependently and independently of the Sec translocase complex, as well as at least some lipoproteins.</text>
</comment>
<comment type="subcellular location">
    <subcellularLocation>
        <location evidence="1">Cell membrane</location>
        <topology evidence="1">Multi-pass membrane protein</topology>
    </subcellularLocation>
</comment>
<comment type="similarity">
    <text evidence="1">Belongs to the OXA1/ALB3/YidC family. Type 2 subfamily.</text>
</comment>
<protein>
    <recommendedName>
        <fullName evidence="1">Membrane protein insertase YidC</fullName>
    </recommendedName>
    <alternativeName>
        <fullName evidence="1">Foldase YidC</fullName>
    </alternativeName>
    <alternativeName>
        <fullName evidence="1">Membrane integrase YidC</fullName>
    </alternativeName>
    <alternativeName>
        <fullName evidence="1">Membrane protein YidC</fullName>
    </alternativeName>
</protein>
<organism>
    <name type="scientific">Staphylococcus aureus (strain Mu50 / ATCC 700699)</name>
    <dbReference type="NCBI Taxonomy" id="158878"/>
    <lineage>
        <taxon>Bacteria</taxon>
        <taxon>Bacillati</taxon>
        <taxon>Bacillota</taxon>
        <taxon>Bacilli</taxon>
        <taxon>Bacillales</taxon>
        <taxon>Staphylococcaceae</taxon>
        <taxon>Staphylococcus</taxon>
    </lineage>
</organism>
<evidence type="ECO:0000255" key="1">
    <source>
        <dbReference type="HAMAP-Rule" id="MF_01811"/>
    </source>
</evidence>
<evidence type="ECO:0000256" key="2">
    <source>
        <dbReference type="SAM" id="MobiDB-lite"/>
    </source>
</evidence>
<feature type="signal peptide" evidence="1">
    <location>
        <begin position="1"/>
        <end position="19"/>
    </location>
</feature>
<feature type="chain" id="PRO_0000020392" description="Membrane protein insertase YidC">
    <location>
        <begin position="20"/>
        <end position="290"/>
    </location>
</feature>
<feature type="transmembrane region" description="Helical" evidence="1">
    <location>
        <begin position="56"/>
        <end position="76"/>
    </location>
</feature>
<feature type="transmembrane region" description="Helical" evidence="1">
    <location>
        <begin position="134"/>
        <end position="154"/>
    </location>
</feature>
<feature type="transmembrane region" description="Helical" evidence="1">
    <location>
        <begin position="176"/>
        <end position="196"/>
    </location>
</feature>
<feature type="transmembrane region" description="Helical" evidence="1">
    <location>
        <begin position="207"/>
        <end position="224"/>
    </location>
</feature>
<feature type="transmembrane region" description="Helical" evidence="1">
    <location>
        <begin position="229"/>
        <end position="251"/>
    </location>
</feature>
<feature type="region of interest" description="Disordered" evidence="2">
    <location>
        <begin position="270"/>
        <end position="290"/>
    </location>
</feature>
<feature type="lipid moiety-binding region" description="N-palmitoyl cysteine" evidence="1">
    <location>
        <position position="20"/>
    </location>
</feature>
<feature type="lipid moiety-binding region" description="S-diacylglycerol cysteine" evidence="1">
    <location>
        <position position="20"/>
    </location>
</feature>